<feature type="signal peptide" evidence="2">
    <location>
        <begin position="1"/>
        <end position="20"/>
    </location>
</feature>
<feature type="propeptide" id="PRO_0000407743" evidence="1">
    <location>
        <begin position="21"/>
        <end position="44"/>
    </location>
</feature>
<feature type="chain" id="PRO_0000407744" description="Disintegrin subunit alpha">
    <location>
        <begin position="45"/>
        <end position="109"/>
    </location>
</feature>
<feature type="propeptide" id="PRO_0000407745" evidence="1">
    <location>
        <begin position="110"/>
        <end position="111"/>
    </location>
</feature>
<feature type="domain" description="Disintegrin" evidence="3">
    <location>
        <begin position="45"/>
        <end position="111"/>
    </location>
</feature>
<feature type="short sequence motif" description="Cell attachment site">
    <location>
        <begin position="89"/>
        <end position="91"/>
    </location>
</feature>
<feature type="disulfide bond" evidence="3">
    <location>
        <begin position="53"/>
        <end position="76"/>
    </location>
</feature>
<feature type="disulfide bond" description="Interchain" evidence="3">
    <location>
        <position position="54"/>
    </location>
</feature>
<feature type="disulfide bond" description="Interchain" evidence="3">
    <location>
        <position position="59"/>
    </location>
</feature>
<feature type="disulfide bond" evidence="3">
    <location>
        <begin position="67"/>
        <end position="73"/>
    </location>
</feature>
<feature type="disulfide bond" evidence="3">
    <location>
        <begin position="72"/>
        <end position="97"/>
    </location>
</feature>
<feature type="disulfide bond" evidence="3">
    <location>
        <begin position="85"/>
        <end position="104"/>
    </location>
</feature>
<feature type="sequence conflict" description="In Ref. 1; EV854797." evidence="4" ref="1">
    <original>A</original>
    <variation>S</variation>
    <location>
        <position position="65"/>
    </location>
</feature>
<dbReference type="EMBL" id="EV854797">
    <property type="status" value="NOT_ANNOTATED_CDS"/>
    <property type="molecule type" value="mRNA"/>
</dbReference>
<dbReference type="EMBL" id="GQ451443">
    <property type="protein sequence ID" value="ACV83937.1"/>
    <property type="molecule type" value="mRNA"/>
</dbReference>
<dbReference type="SMR" id="C9E1S2"/>
<dbReference type="GO" id="GO:0005576">
    <property type="term" value="C:extracellular region"/>
    <property type="evidence" value="ECO:0007669"/>
    <property type="project" value="UniProtKB-SubCell"/>
</dbReference>
<dbReference type="GO" id="GO:0005886">
    <property type="term" value="C:plasma membrane"/>
    <property type="evidence" value="ECO:0007669"/>
    <property type="project" value="TreeGrafter"/>
</dbReference>
<dbReference type="GO" id="GO:0090729">
    <property type="term" value="F:toxin activity"/>
    <property type="evidence" value="ECO:0007669"/>
    <property type="project" value="UniProtKB-KW"/>
</dbReference>
<dbReference type="FunFam" id="4.10.70.10:FF:000005">
    <property type="entry name" value="Zinc metalloproteinase/disintegrin"/>
    <property type="match status" value="1"/>
</dbReference>
<dbReference type="Gene3D" id="4.10.70.10">
    <property type="entry name" value="Disintegrin domain"/>
    <property type="match status" value="1"/>
</dbReference>
<dbReference type="InterPro" id="IPR018358">
    <property type="entry name" value="Disintegrin_CS"/>
</dbReference>
<dbReference type="InterPro" id="IPR001762">
    <property type="entry name" value="Disintegrin_dom"/>
</dbReference>
<dbReference type="InterPro" id="IPR036436">
    <property type="entry name" value="Disintegrin_dom_sf"/>
</dbReference>
<dbReference type="PANTHER" id="PTHR11905">
    <property type="entry name" value="ADAM A DISINTEGRIN AND METALLOPROTEASE DOMAIN"/>
    <property type="match status" value="1"/>
</dbReference>
<dbReference type="PANTHER" id="PTHR11905:SF32">
    <property type="entry name" value="DISINTEGRIN AND METALLOPROTEINASE DOMAIN-CONTAINING PROTEIN 28"/>
    <property type="match status" value="1"/>
</dbReference>
<dbReference type="Pfam" id="PF00200">
    <property type="entry name" value="Disintegrin"/>
    <property type="match status" value="1"/>
</dbReference>
<dbReference type="PRINTS" id="PR00289">
    <property type="entry name" value="DISINTEGRIN"/>
</dbReference>
<dbReference type="SMART" id="SM00050">
    <property type="entry name" value="DISIN"/>
    <property type="match status" value="1"/>
</dbReference>
<dbReference type="SUPFAM" id="SSF57552">
    <property type="entry name" value="Blood coagulation inhibitor (disintegrin)"/>
    <property type="match status" value="1"/>
</dbReference>
<dbReference type="PROSITE" id="PS00427">
    <property type="entry name" value="DISINTEGRIN_1"/>
    <property type="match status" value="1"/>
</dbReference>
<dbReference type="PROSITE" id="PS50214">
    <property type="entry name" value="DISINTEGRIN_2"/>
    <property type="match status" value="1"/>
</dbReference>
<organism>
    <name type="scientific">Agkistrodon piscivorus leucostoma</name>
    <name type="common">Western cottonmouth</name>
    <name type="synonym">Acontias leucostoma</name>
    <dbReference type="NCBI Taxonomy" id="459671"/>
    <lineage>
        <taxon>Eukaryota</taxon>
        <taxon>Metazoa</taxon>
        <taxon>Chordata</taxon>
        <taxon>Craniata</taxon>
        <taxon>Vertebrata</taxon>
        <taxon>Euteleostomi</taxon>
        <taxon>Lepidosauria</taxon>
        <taxon>Squamata</taxon>
        <taxon>Bifurcata</taxon>
        <taxon>Unidentata</taxon>
        <taxon>Episquamata</taxon>
        <taxon>Toxicofera</taxon>
        <taxon>Serpentes</taxon>
        <taxon>Colubroidea</taxon>
        <taxon>Viperidae</taxon>
        <taxon>Crotalinae</taxon>
        <taxon>Agkistrodon</taxon>
    </lineage>
</organism>
<evidence type="ECO:0000250" key="1"/>
<evidence type="ECO:0000255" key="2"/>
<evidence type="ECO:0000255" key="3">
    <source>
        <dbReference type="PROSITE-ProRule" id="PRU00068"/>
    </source>
</evidence>
<evidence type="ECO:0000305" key="4"/>
<keyword id="KW-1217">Cell adhesion impairing toxin</keyword>
<keyword id="KW-1015">Disulfide bond</keyword>
<keyword id="KW-0964">Secreted</keyword>
<keyword id="KW-0732">Signal</keyword>
<keyword id="KW-0800">Toxin</keyword>
<name>DIDA_AGKPL</name>
<proteinExistence type="evidence at transcript level"/>
<protein>
    <recommendedName>
        <fullName>Disintegrin subunit alpha</fullName>
    </recommendedName>
</protein>
<reference key="1">
    <citation type="journal article" date="2008" name="Toxicon">
        <title>Complementary DNA sequencing and identification of mRNAs from the venomous gland of Agkistrodon piscivorus leucostoma.</title>
        <authorList>
            <person name="Jia Y."/>
            <person name="Cantu B.A."/>
            <person name="Sanchez E.E."/>
            <person name="Perez J.C."/>
        </authorList>
    </citation>
    <scope>NUCLEOTIDE SEQUENCE [MRNA]</scope>
    <source>
        <tissue>Venom gland</tissue>
    </source>
</reference>
<reference key="2">
    <citation type="journal article" date="2010" name="Toxicon">
        <title>Molecular cloning and characterization of cDNAs encoding metalloproteinases from snake venom glands.</title>
        <authorList>
            <person name="Jia Y."/>
            <person name="Perez J.C."/>
        </authorList>
    </citation>
    <scope>NUCLEOTIDE SEQUENCE [MRNA]</scope>
    <source>
        <tissue>Venom gland</tissue>
    </source>
</reference>
<accession>C9E1S2</accession>
<sequence length="111" mass="12103">MIQVLLVTICLAVFPYQGSSIILESGNVNDYEVVYPRKITPLPKGAVQPKNPCCDAATCKLTPGAQCAEGLCCDQCKFIKAGKICRRARGDNPDYRCTGQSGDCPRKHFYA</sequence>
<comment type="function">
    <text evidence="1">Acts by binding to alpha-IIb/beta-3 (ITGA2B/ITGB3) on the platelet surface and inhibits both ADP-induced platelet aggregation and platelet aggregate dissociation in human platelet-rich plasma.</text>
</comment>
<comment type="subunit">
    <text evidence="1">Heterodimer with subunit beta; disulfide-linked.</text>
</comment>
<comment type="subcellular location">
    <subcellularLocation>
        <location evidence="1">Secreted</location>
    </subcellularLocation>
</comment>
<comment type="tissue specificity">
    <text>Expressed by the venom gland.</text>
</comment>
<comment type="similarity">
    <text evidence="4">Belongs to the disintegrin family. Dimeric disintegrin subfamily.</text>
</comment>